<reference key="1">
    <citation type="journal article" date="2004" name="Nat. Genet.">
        <title>Complete sequencing and characterization of 21,243 full-length human cDNAs.</title>
        <authorList>
            <person name="Ota T."/>
            <person name="Suzuki Y."/>
            <person name="Nishikawa T."/>
            <person name="Otsuki T."/>
            <person name="Sugiyama T."/>
            <person name="Irie R."/>
            <person name="Wakamatsu A."/>
            <person name="Hayashi K."/>
            <person name="Sato H."/>
            <person name="Nagai K."/>
            <person name="Kimura K."/>
            <person name="Makita H."/>
            <person name="Sekine M."/>
            <person name="Obayashi M."/>
            <person name="Nishi T."/>
            <person name="Shibahara T."/>
            <person name="Tanaka T."/>
            <person name="Ishii S."/>
            <person name="Yamamoto J."/>
            <person name="Saito K."/>
            <person name="Kawai Y."/>
            <person name="Isono Y."/>
            <person name="Nakamura Y."/>
            <person name="Nagahari K."/>
            <person name="Murakami K."/>
            <person name="Yasuda T."/>
            <person name="Iwayanagi T."/>
            <person name="Wagatsuma M."/>
            <person name="Shiratori A."/>
            <person name="Sudo H."/>
            <person name="Hosoiri T."/>
            <person name="Kaku Y."/>
            <person name="Kodaira H."/>
            <person name="Kondo H."/>
            <person name="Sugawara M."/>
            <person name="Takahashi M."/>
            <person name="Kanda K."/>
            <person name="Yokoi T."/>
            <person name="Furuya T."/>
            <person name="Kikkawa E."/>
            <person name="Omura Y."/>
            <person name="Abe K."/>
            <person name="Kamihara K."/>
            <person name="Katsuta N."/>
            <person name="Sato K."/>
            <person name="Tanikawa M."/>
            <person name="Yamazaki M."/>
            <person name="Ninomiya K."/>
            <person name="Ishibashi T."/>
            <person name="Yamashita H."/>
            <person name="Murakawa K."/>
            <person name="Fujimori K."/>
            <person name="Tanai H."/>
            <person name="Kimata M."/>
            <person name="Watanabe M."/>
            <person name="Hiraoka S."/>
            <person name="Chiba Y."/>
            <person name="Ishida S."/>
            <person name="Ono Y."/>
            <person name="Takiguchi S."/>
            <person name="Watanabe S."/>
            <person name="Yosida M."/>
            <person name="Hotuta T."/>
            <person name="Kusano J."/>
            <person name="Kanehori K."/>
            <person name="Takahashi-Fujii A."/>
            <person name="Hara H."/>
            <person name="Tanase T.-O."/>
            <person name="Nomura Y."/>
            <person name="Togiya S."/>
            <person name="Komai F."/>
            <person name="Hara R."/>
            <person name="Takeuchi K."/>
            <person name="Arita M."/>
            <person name="Imose N."/>
            <person name="Musashino K."/>
            <person name="Yuuki H."/>
            <person name="Oshima A."/>
            <person name="Sasaki N."/>
            <person name="Aotsuka S."/>
            <person name="Yoshikawa Y."/>
            <person name="Matsunawa H."/>
            <person name="Ichihara T."/>
            <person name="Shiohata N."/>
            <person name="Sano S."/>
            <person name="Moriya S."/>
            <person name="Momiyama H."/>
            <person name="Satoh N."/>
            <person name="Takami S."/>
            <person name="Terashima Y."/>
            <person name="Suzuki O."/>
            <person name="Nakagawa S."/>
            <person name="Senoh A."/>
            <person name="Mizoguchi H."/>
            <person name="Goto Y."/>
            <person name="Shimizu F."/>
            <person name="Wakebe H."/>
            <person name="Hishigaki H."/>
            <person name="Watanabe T."/>
            <person name="Sugiyama A."/>
            <person name="Takemoto M."/>
            <person name="Kawakami B."/>
            <person name="Yamazaki M."/>
            <person name="Watanabe K."/>
            <person name="Kumagai A."/>
            <person name="Itakura S."/>
            <person name="Fukuzumi Y."/>
            <person name="Fujimori Y."/>
            <person name="Komiyama M."/>
            <person name="Tashiro H."/>
            <person name="Tanigami A."/>
            <person name="Fujiwara T."/>
            <person name="Ono T."/>
            <person name="Yamada K."/>
            <person name="Fujii Y."/>
            <person name="Ozaki K."/>
            <person name="Hirao M."/>
            <person name="Ohmori Y."/>
            <person name="Kawabata A."/>
            <person name="Hikiji T."/>
            <person name="Kobatake N."/>
            <person name="Inagaki H."/>
            <person name="Ikema Y."/>
            <person name="Okamoto S."/>
            <person name="Okitani R."/>
            <person name="Kawakami T."/>
            <person name="Noguchi S."/>
            <person name="Itoh T."/>
            <person name="Shigeta K."/>
            <person name="Senba T."/>
            <person name="Matsumura K."/>
            <person name="Nakajima Y."/>
            <person name="Mizuno T."/>
            <person name="Morinaga M."/>
            <person name="Sasaki M."/>
            <person name="Togashi T."/>
            <person name="Oyama M."/>
            <person name="Hata H."/>
            <person name="Watanabe M."/>
            <person name="Komatsu T."/>
            <person name="Mizushima-Sugano J."/>
            <person name="Satoh T."/>
            <person name="Shirai Y."/>
            <person name="Takahashi Y."/>
            <person name="Nakagawa K."/>
            <person name="Okumura K."/>
            <person name="Nagase T."/>
            <person name="Nomura N."/>
            <person name="Kikuchi H."/>
            <person name="Masuho Y."/>
            <person name="Yamashita R."/>
            <person name="Nakai K."/>
            <person name="Yada T."/>
            <person name="Nakamura Y."/>
            <person name="Ohara O."/>
            <person name="Isogai T."/>
            <person name="Sugano S."/>
        </authorList>
    </citation>
    <scope>NUCLEOTIDE SEQUENCE [LARGE SCALE MRNA]</scope>
    <source>
        <tissue>Teratocarcinoma</tissue>
    </source>
</reference>
<reference key="2">
    <citation type="journal article" date="2004" name="Genome Res.">
        <title>The status, quality, and expansion of the NIH full-length cDNA project: the Mammalian Gene Collection (MGC).</title>
        <authorList>
            <consortium name="The MGC Project Team"/>
        </authorList>
    </citation>
    <scope>NUCLEOTIDE SEQUENCE [LARGE SCALE MRNA]</scope>
    <source>
        <tissue>Liver</tissue>
    </source>
</reference>
<reference key="3">
    <citation type="journal article" date="2006" name="Beijing Da Xue Xue Bao">
        <title>Cloning, expression and subcellular localization of a novel human gene -- RNF122.</title>
        <authorList>
            <person name="Wang L."/>
            <person name="Shi T.P."/>
            <person name="Wang L."/>
            <person name="Yu C.F."/>
            <person name="Zeng L.E."/>
            <person name="Wang J."/>
            <person name="Wang L."/>
        </authorList>
    </citation>
    <scope>SUBCELLULAR LOCATION</scope>
    <scope>TISSUE SPECIFICITY</scope>
</reference>
<reference key="4">
    <citation type="journal article" date="2006" name="J. Biomol. Screen.">
        <title>Cell-based screening and validation of human novel genes associated with cell viability.</title>
        <authorList>
            <person name="Wang L."/>
            <person name="Gao X."/>
            <person name="Gao P."/>
            <person name="Deng W."/>
            <person name="Yu P."/>
            <person name="Ma J."/>
            <person name="Guo J."/>
            <person name="Wang X."/>
            <person name="Cheng H."/>
            <person name="Zhang C."/>
            <person name="Yu C."/>
            <person name="Ma X."/>
            <person name="Lv B."/>
            <person name="Lu Y."/>
            <person name="Shi T."/>
            <person name="Ma D."/>
        </authorList>
    </citation>
    <scope>FUNCTION</scope>
</reference>
<accession>Q9H9V4</accession>
<accession>Q52LK3</accession>
<organism>
    <name type="scientific">Homo sapiens</name>
    <name type="common">Human</name>
    <dbReference type="NCBI Taxonomy" id="9606"/>
    <lineage>
        <taxon>Eukaryota</taxon>
        <taxon>Metazoa</taxon>
        <taxon>Chordata</taxon>
        <taxon>Craniata</taxon>
        <taxon>Vertebrata</taxon>
        <taxon>Euteleostomi</taxon>
        <taxon>Mammalia</taxon>
        <taxon>Eutheria</taxon>
        <taxon>Euarchontoglires</taxon>
        <taxon>Primates</taxon>
        <taxon>Haplorrhini</taxon>
        <taxon>Catarrhini</taxon>
        <taxon>Hominidae</taxon>
        <taxon>Homo</taxon>
    </lineage>
</organism>
<keyword id="KW-0256">Endoplasmic reticulum</keyword>
<keyword id="KW-0333">Golgi apparatus</keyword>
<keyword id="KW-0472">Membrane</keyword>
<keyword id="KW-0479">Metal-binding</keyword>
<keyword id="KW-1267">Proteomics identification</keyword>
<keyword id="KW-1185">Reference proteome</keyword>
<keyword id="KW-0812">Transmembrane</keyword>
<keyword id="KW-1133">Transmembrane helix</keyword>
<keyword id="KW-0862">Zinc</keyword>
<keyword id="KW-0863">Zinc-finger</keyword>
<protein>
    <recommendedName>
        <fullName>RING finger protein 122</fullName>
    </recommendedName>
</protein>
<comment type="function">
    <text evidence="3">May induce necrosis and apoptosis. May play a role in cell viability.</text>
</comment>
<comment type="interaction">
    <interactant intactId="EBI-2129998">
        <id>Q9H9V4</id>
    </interactant>
    <interactant intactId="EBI-745213">
        <id>P29972</id>
        <label>AQP1</label>
    </interactant>
    <organismsDiffer>false</organismsDiffer>
    <experiments>3</experiments>
</comment>
<comment type="interaction">
    <interactant intactId="EBI-2129998">
        <id>Q9H9V4</id>
    </interactant>
    <interactant intactId="EBI-3913685">
        <id>O95674</id>
        <label>CDS2</label>
    </interactant>
    <organismsDiffer>false</organismsDiffer>
    <experiments>3</experiments>
</comment>
<comment type="interaction">
    <interactant intactId="EBI-2129998">
        <id>Q9H9V4</id>
    </interactant>
    <interactant intactId="EBI-2927498">
        <id>O60883</id>
        <label>GPR37L1</label>
    </interactant>
    <organismsDiffer>false</organismsDiffer>
    <experiments>3</experiments>
</comment>
<comment type="interaction">
    <interactant intactId="EBI-2129998">
        <id>Q9H9V4</id>
    </interactant>
    <interactant intactId="EBI-3919291">
        <id>Q9Y342</id>
        <label>PLLP</label>
    </interactant>
    <organismsDiffer>false</organismsDiffer>
    <experiments>3</experiments>
</comment>
<comment type="interaction">
    <interactant intactId="EBI-2129998">
        <id>Q9H9V4</id>
    </interactant>
    <interactant intactId="EBI-14210385">
        <id>Q59EV6</id>
        <label>PPGB</label>
    </interactant>
    <organismsDiffer>false</organismsDiffer>
    <experiments>3</experiments>
</comment>
<comment type="subcellular location">
    <subcellularLocation>
        <location evidence="4">Golgi apparatus</location>
    </subcellularLocation>
    <subcellularLocation>
        <location evidence="4">Endoplasmic reticulum</location>
    </subcellularLocation>
    <subcellularLocation>
        <location evidence="5">Membrane</location>
        <topology evidence="5">Single-pass membrane protein</topology>
    </subcellularLocation>
</comment>
<comment type="tissue specificity">
    <text evidence="4">Widely expressed in several tissues and cell lines.</text>
</comment>
<gene>
    <name type="primary">RNF122</name>
</gene>
<feature type="chain" id="PRO_0000247852" description="RING finger protein 122">
    <location>
        <begin position="1"/>
        <end position="155"/>
    </location>
</feature>
<feature type="transmembrane region" description="Helical" evidence="1">
    <location>
        <begin position="40"/>
        <end position="60"/>
    </location>
</feature>
<feature type="zinc finger region" description="RING-type; atypical" evidence="2">
    <location>
        <begin position="93"/>
        <end position="134"/>
    </location>
</feature>
<feature type="sequence conflict" description="In Ref. 1; BAB14115." evidence="5" ref="1">
    <original>E</original>
    <variation>D</variation>
    <location>
        <position position="70"/>
    </location>
</feature>
<evidence type="ECO:0000255" key="1"/>
<evidence type="ECO:0000255" key="2">
    <source>
        <dbReference type="PROSITE-ProRule" id="PRU00175"/>
    </source>
</evidence>
<evidence type="ECO:0000269" key="3">
    <source>
    </source>
</evidence>
<evidence type="ECO:0000269" key="4">
    <source>
    </source>
</evidence>
<evidence type="ECO:0000305" key="5"/>
<dbReference type="EMBL" id="AK022588">
    <property type="protein sequence ID" value="BAB14115.1"/>
    <property type="molecule type" value="mRNA"/>
</dbReference>
<dbReference type="EMBL" id="BC093884">
    <property type="protein sequence ID" value="AAH93884.1"/>
    <property type="molecule type" value="mRNA"/>
</dbReference>
<dbReference type="EMBL" id="BC101573">
    <property type="protein sequence ID" value="AAI01574.1"/>
    <property type="molecule type" value="mRNA"/>
</dbReference>
<dbReference type="CCDS" id="CCDS6091.1"/>
<dbReference type="RefSeq" id="NP_079063.2">
    <property type="nucleotide sequence ID" value="NM_024787.3"/>
</dbReference>
<dbReference type="SMR" id="Q9H9V4"/>
<dbReference type="BioGRID" id="122936">
    <property type="interactions" value="16"/>
</dbReference>
<dbReference type="FunCoup" id="Q9H9V4">
    <property type="interactions" value="519"/>
</dbReference>
<dbReference type="IntAct" id="Q9H9V4">
    <property type="interactions" value="10"/>
</dbReference>
<dbReference type="STRING" id="9606.ENSP00000256257"/>
<dbReference type="iPTMnet" id="Q9H9V4"/>
<dbReference type="PhosphoSitePlus" id="Q9H9V4"/>
<dbReference type="BioMuta" id="RNF122"/>
<dbReference type="DMDM" id="110816410"/>
<dbReference type="jPOST" id="Q9H9V4"/>
<dbReference type="MassIVE" id="Q9H9V4"/>
<dbReference type="PaxDb" id="9606-ENSP00000256257"/>
<dbReference type="PeptideAtlas" id="Q9H9V4"/>
<dbReference type="ProteomicsDB" id="81364"/>
<dbReference type="Antibodypedia" id="1235">
    <property type="antibodies" value="175 antibodies from 24 providers"/>
</dbReference>
<dbReference type="DNASU" id="79845"/>
<dbReference type="Ensembl" id="ENST00000256257.2">
    <property type="protein sequence ID" value="ENSP00000256257.1"/>
    <property type="gene ID" value="ENSG00000133874.2"/>
</dbReference>
<dbReference type="GeneID" id="79845"/>
<dbReference type="KEGG" id="hsa:79845"/>
<dbReference type="MANE-Select" id="ENST00000256257.2">
    <property type="protein sequence ID" value="ENSP00000256257.1"/>
    <property type="RefSeq nucleotide sequence ID" value="NM_024787.3"/>
    <property type="RefSeq protein sequence ID" value="NP_079063.2"/>
</dbReference>
<dbReference type="UCSC" id="uc003xjo.3">
    <property type="organism name" value="human"/>
</dbReference>
<dbReference type="AGR" id="HGNC:21147"/>
<dbReference type="CTD" id="79845"/>
<dbReference type="DisGeNET" id="79845"/>
<dbReference type="GeneCards" id="RNF122"/>
<dbReference type="HGNC" id="HGNC:21147">
    <property type="gene designation" value="RNF122"/>
</dbReference>
<dbReference type="HPA" id="ENSG00000133874">
    <property type="expression patterns" value="Low tissue specificity"/>
</dbReference>
<dbReference type="MIM" id="620523">
    <property type="type" value="gene"/>
</dbReference>
<dbReference type="neXtProt" id="NX_Q9H9V4"/>
<dbReference type="OpenTargets" id="ENSG00000133874"/>
<dbReference type="PharmGKB" id="PA134892945"/>
<dbReference type="VEuPathDB" id="HostDB:ENSG00000133874"/>
<dbReference type="eggNOG" id="KOG0800">
    <property type="taxonomic scope" value="Eukaryota"/>
</dbReference>
<dbReference type="GeneTree" id="ENSGT00940000159152"/>
<dbReference type="HOGENOM" id="CLU_142341_0_0_1"/>
<dbReference type="InParanoid" id="Q9H9V4"/>
<dbReference type="OMA" id="ANKSCTM"/>
<dbReference type="OrthoDB" id="8062037at2759"/>
<dbReference type="PAN-GO" id="Q9H9V4">
    <property type="GO annotations" value="2 GO annotations based on evolutionary models"/>
</dbReference>
<dbReference type="PhylomeDB" id="Q9H9V4"/>
<dbReference type="PathwayCommons" id="Q9H9V4"/>
<dbReference type="SignaLink" id="Q9H9V4"/>
<dbReference type="SIGNOR" id="Q9H9V4"/>
<dbReference type="BioGRID-ORCS" id="79845">
    <property type="hits" value="13 hits in 1196 CRISPR screens"/>
</dbReference>
<dbReference type="ChiTaRS" id="RNF122">
    <property type="organism name" value="human"/>
</dbReference>
<dbReference type="GeneWiki" id="RNF122"/>
<dbReference type="GenomeRNAi" id="79845"/>
<dbReference type="Pharos" id="Q9H9V4">
    <property type="development level" value="Tdark"/>
</dbReference>
<dbReference type="PRO" id="PR:Q9H9V4"/>
<dbReference type="Proteomes" id="UP000005640">
    <property type="component" value="Chromosome 8"/>
</dbReference>
<dbReference type="RNAct" id="Q9H9V4">
    <property type="molecule type" value="protein"/>
</dbReference>
<dbReference type="Bgee" id="ENSG00000133874">
    <property type="expression patterns" value="Expressed in left uterine tube and 117 other cell types or tissues"/>
</dbReference>
<dbReference type="GO" id="GO:0005737">
    <property type="term" value="C:cytoplasm"/>
    <property type="evidence" value="ECO:0000314"/>
    <property type="project" value="UniProtKB"/>
</dbReference>
<dbReference type="GO" id="GO:0005783">
    <property type="term" value="C:endoplasmic reticulum"/>
    <property type="evidence" value="ECO:0007669"/>
    <property type="project" value="UniProtKB-SubCell"/>
</dbReference>
<dbReference type="GO" id="GO:0005794">
    <property type="term" value="C:Golgi apparatus"/>
    <property type="evidence" value="ECO:0007669"/>
    <property type="project" value="UniProtKB-SubCell"/>
</dbReference>
<dbReference type="GO" id="GO:0016020">
    <property type="term" value="C:membrane"/>
    <property type="evidence" value="ECO:0007669"/>
    <property type="project" value="UniProtKB-SubCell"/>
</dbReference>
<dbReference type="GO" id="GO:0061630">
    <property type="term" value="F:ubiquitin protein ligase activity"/>
    <property type="evidence" value="ECO:0000315"/>
    <property type="project" value="UniProtKB"/>
</dbReference>
<dbReference type="GO" id="GO:0008270">
    <property type="term" value="F:zinc ion binding"/>
    <property type="evidence" value="ECO:0007669"/>
    <property type="project" value="UniProtKB-KW"/>
</dbReference>
<dbReference type="GO" id="GO:0010917">
    <property type="term" value="P:negative regulation of mitochondrial membrane potential"/>
    <property type="evidence" value="ECO:0000314"/>
    <property type="project" value="UniProtKB"/>
</dbReference>
<dbReference type="GO" id="GO:0043065">
    <property type="term" value="P:positive regulation of apoptotic process"/>
    <property type="evidence" value="ECO:0000314"/>
    <property type="project" value="UniProtKB"/>
</dbReference>
<dbReference type="GO" id="GO:0043161">
    <property type="term" value="P:proteasome-mediated ubiquitin-dependent protein catabolic process"/>
    <property type="evidence" value="ECO:0000315"/>
    <property type="project" value="UniProtKB"/>
</dbReference>
<dbReference type="GO" id="GO:0051865">
    <property type="term" value="P:protein autoubiquitination"/>
    <property type="evidence" value="ECO:0000315"/>
    <property type="project" value="UniProtKB"/>
</dbReference>
<dbReference type="CDD" id="cd16676">
    <property type="entry name" value="RING-H2_RNF122"/>
    <property type="match status" value="1"/>
</dbReference>
<dbReference type="FunFam" id="3.30.40.10:FF:000423">
    <property type="entry name" value="Ring finger protein 122"/>
    <property type="match status" value="1"/>
</dbReference>
<dbReference type="Gene3D" id="3.30.40.10">
    <property type="entry name" value="Zinc/RING finger domain, C3HC4 (zinc finger)"/>
    <property type="match status" value="1"/>
</dbReference>
<dbReference type="InterPro" id="IPR051834">
    <property type="entry name" value="RING_finger_E3_ligase"/>
</dbReference>
<dbReference type="InterPro" id="IPR001841">
    <property type="entry name" value="Znf_RING"/>
</dbReference>
<dbReference type="InterPro" id="IPR013083">
    <property type="entry name" value="Znf_RING/FYVE/PHD"/>
</dbReference>
<dbReference type="PANTHER" id="PTHR45931:SF3">
    <property type="entry name" value="RING ZINC FINGER-CONTAINING PROTEIN"/>
    <property type="match status" value="1"/>
</dbReference>
<dbReference type="PANTHER" id="PTHR45931">
    <property type="entry name" value="SI:CH211-59O9.10"/>
    <property type="match status" value="1"/>
</dbReference>
<dbReference type="Pfam" id="PF13639">
    <property type="entry name" value="zf-RING_2"/>
    <property type="match status" value="1"/>
</dbReference>
<dbReference type="SMART" id="SM00184">
    <property type="entry name" value="RING"/>
    <property type="match status" value="1"/>
</dbReference>
<dbReference type="SUPFAM" id="SSF57850">
    <property type="entry name" value="RING/U-box"/>
    <property type="match status" value="1"/>
</dbReference>
<dbReference type="PROSITE" id="PS50089">
    <property type="entry name" value="ZF_RING_2"/>
    <property type="match status" value="1"/>
</dbReference>
<name>RN122_HUMAN</name>
<sequence>MHPFQWCNGCFCGLGLVSTNKSCSMPPISFQDLPLNIYMVIFGTGIFVFMLSLIFCCYFISKLRNQAQSERYGYKEVVLKGDAKKLQLYGQTCAVCLEDFKGKDELGVLPCQHAFHRKCLVKWLEVRCVCPMCNKPIASPSEATQNIGILLDELV</sequence>
<proteinExistence type="evidence at protein level"/>